<feature type="transit peptide" description="Chloroplast" evidence="3">
    <location>
        <begin position="1"/>
        <end position="41"/>
    </location>
</feature>
<feature type="chain" id="PRO_0000455018" description="Alpha terpineol synthase, chloroplastic">
    <location>
        <begin position="42"/>
        <end position="616"/>
    </location>
</feature>
<feature type="short sequence motif" description="DDXXD motif" evidence="6">
    <location>
        <begin position="367"/>
        <end position="371"/>
    </location>
</feature>
<feature type="binding site" evidence="2">
    <location>
        <position position="367"/>
    </location>
    <ligand>
        <name>Mg(2+)</name>
        <dbReference type="ChEBI" id="CHEBI:18420"/>
        <label>1</label>
    </ligand>
</feature>
<feature type="binding site" evidence="2">
    <location>
        <position position="367"/>
    </location>
    <ligand>
        <name>Mg(2+)</name>
        <dbReference type="ChEBI" id="CHEBI:18420"/>
        <label>2</label>
    </ligand>
</feature>
<feature type="binding site" evidence="2">
    <location>
        <position position="371"/>
    </location>
    <ligand>
        <name>Mg(2+)</name>
        <dbReference type="ChEBI" id="CHEBI:18420"/>
        <label>1</label>
    </ligand>
</feature>
<feature type="binding site" evidence="2">
    <location>
        <position position="371"/>
    </location>
    <ligand>
        <name>Mg(2+)</name>
        <dbReference type="ChEBI" id="CHEBI:18420"/>
        <label>2</label>
    </ligand>
</feature>
<feature type="binding site" evidence="2">
    <location>
        <position position="519"/>
    </location>
    <ligand>
        <name>Mg(2+)</name>
        <dbReference type="ChEBI" id="CHEBI:18420"/>
        <label>3</label>
    </ligand>
</feature>
<proteinExistence type="evidence at protein level"/>
<reference key="1">
    <citation type="journal article" date="2013" name="BMC Plant Biol.">
        <title>Transcriptome resources and functional characterization of monoterpene synthases for two host species of the mountain pine beetle, lodgepole pine (Pinus contorta) and jack pine (Pinus banksiana).</title>
        <authorList>
            <person name="Hall D.E."/>
            <person name="Yuen M.M.S."/>
            <person name="Jancsik S."/>
            <person name="Quesada A.L."/>
            <person name="Dullat H.K."/>
            <person name="Li M."/>
            <person name="Henderson H."/>
            <person name="Arango-Velez A."/>
            <person name="Liao N.Y."/>
            <person name="Docking R.T."/>
            <person name="Chan S.K."/>
            <person name="Cooke J.E.K."/>
            <person name="Breuil C."/>
            <person name="Jones S.J.M."/>
            <person name="Keeling C.I."/>
            <person name="Bohlmann J."/>
        </authorList>
    </citation>
    <scope>NUCLEOTIDE SEQUENCE [MRNA]</scope>
    <scope>FUNCTION</scope>
    <scope>CATALYTIC ACTIVITY</scope>
    <scope>PATHWAY</scope>
</reference>
<comment type="function">
    <text evidence="4">Monoterpene synthase (TPS) involved in the biosynthesis of monoterpene natural products included in conifer oleoresin secretions and volatile emissions; these compounds contribute to biotic and abiotic stress defense against herbivores and pathogens (PubMed:23679205). Catalyzes the conversion of (2E)-geranyl diphosphate (GPP) to alpha-terpineol and, to a lower extent, to 1,8-cineole, myrcene and (-)-sabinene (PubMed:23679205).</text>
</comment>
<comment type="catalytic activity">
    <reaction evidence="4">
        <text>(2E)-geranyl diphosphate + H2O = (S)-alpha-terpineol + diphosphate</text>
        <dbReference type="Rhea" id="RHEA:32551"/>
        <dbReference type="ChEBI" id="CHEBI:128"/>
        <dbReference type="ChEBI" id="CHEBI:15377"/>
        <dbReference type="ChEBI" id="CHEBI:33019"/>
        <dbReference type="ChEBI" id="CHEBI:58057"/>
        <dbReference type="EC" id="4.2.3.111"/>
    </reaction>
    <physiologicalReaction direction="left-to-right" evidence="4">
        <dbReference type="Rhea" id="RHEA:32552"/>
    </physiologicalReaction>
</comment>
<comment type="catalytic activity">
    <reaction evidence="4">
        <text>(2E)-geranyl diphosphate + H2O = 1,8-cineole + diphosphate</text>
        <dbReference type="Rhea" id="RHEA:32543"/>
        <dbReference type="ChEBI" id="CHEBI:15377"/>
        <dbReference type="ChEBI" id="CHEBI:27961"/>
        <dbReference type="ChEBI" id="CHEBI:33019"/>
        <dbReference type="ChEBI" id="CHEBI:58057"/>
        <dbReference type="EC" id="4.2.3.108"/>
    </reaction>
    <physiologicalReaction direction="left-to-right" evidence="4">
        <dbReference type="Rhea" id="RHEA:32544"/>
    </physiologicalReaction>
</comment>
<comment type="catalytic activity">
    <reaction evidence="4">
        <text>(2E)-geranyl diphosphate = beta-myrcene + diphosphate</text>
        <dbReference type="Rhea" id="RHEA:16965"/>
        <dbReference type="ChEBI" id="CHEBI:17221"/>
        <dbReference type="ChEBI" id="CHEBI:33019"/>
        <dbReference type="ChEBI" id="CHEBI:58057"/>
        <dbReference type="EC" id="4.2.3.15"/>
    </reaction>
    <physiologicalReaction direction="left-to-right" evidence="4">
        <dbReference type="Rhea" id="RHEA:16966"/>
    </physiologicalReaction>
</comment>
<comment type="catalytic activity">
    <reaction evidence="4">
        <text>(2E)-geranyl diphosphate = (1S,5S)-sabinene + diphosphate</text>
        <dbReference type="Rhea" id="RHEA:25508"/>
        <dbReference type="ChEBI" id="CHEBI:33019"/>
        <dbReference type="ChEBI" id="CHEBI:50028"/>
        <dbReference type="ChEBI" id="CHEBI:58057"/>
        <dbReference type="EC" id="4.2.3.109"/>
    </reaction>
    <physiologicalReaction direction="left-to-right" evidence="4">
        <dbReference type="Rhea" id="RHEA:25509"/>
    </physiologicalReaction>
</comment>
<comment type="cofactor">
    <cofactor evidence="1">
        <name>Mg(2+)</name>
        <dbReference type="ChEBI" id="CHEBI:18420"/>
    </cofactor>
    <cofactor evidence="1">
        <name>Mn(2+)</name>
        <dbReference type="ChEBI" id="CHEBI:29035"/>
    </cofactor>
    <text evidence="1">Binds 3 Mg(2+) or Mn(2+) ions per subunit.</text>
</comment>
<comment type="pathway">
    <text evidence="4">Terpene metabolism; oleoresin biosynthesis.</text>
</comment>
<comment type="pathway">
    <text evidence="4">Secondary metabolite biosynthesis; terpenoid biosynthesis.</text>
</comment>
<comment type="subcellular location">
    <subcellularLocation>
        <location evidence="3">Plastid</location>
        <location evidence="3">Chloroplast</location>
    </subcellularLocation>
</comment>
<comment type="domain">
    <text evidence="6">The Asp-Asp-Xaa-Xaa-Asp/Glu (DDXXD/E) motif is important for the catalytic activity, presumably through binding to Mg(2+).</text>
</comment>
<comment type="similarity">
    <text evidence="6">Belongs to the terpene synthase family. Tpsd subfamily.</text>
</comment>
<accession>R9QMZ0</accession>
<organism>
    <name type="scientific">Pinus contorta</name>
    <name type="common">Shore pine</name>
    <name type="synonym">Lodgepole pine</name>
    <dbReference type="NCBI Taxonomy" id="3339"/>
    <lineage>
        <taxon>Eukaryota</taxon>
        <taxon>Viridiplantae</taxon>
        <taxon>Streptophyta</taxon>
        <taxon>Embryophyta</taxon>
        <taxon>Tracheophyta</taxon>
        <taxon>Spermatophyta</taxon>
        <taxon>Pinopsida</taxon>
        <taxon>Pinidae</taxon>
        <taxon>Conifers I</taxon>
        <taxon>Pinales</taxon>
        <taxon>Pinaceae</taxon>
        <taxon>Pinus</taxon>
        <taxon>Pinus subgen. Pinus</taxon>
    </lineage>
</organism>
<name>ATERP_PINCO</name>
<gene>
    <name evidence="5" type="primary">TPS-1,8cin</name>
    <name evidence="5" type="synonym">TPS-Aterp</name>
</gene>
<dbReference type="EC" id="4.2.3.111" evidence="4"/>
<dbReference type="EC" id="4.2.3.109" evidence="4"/>
<dbReference type="EC" id="4.2.3.108" evidence="4"/>
<dbReference type="EC" id="4.2.3.15" evidence="4"/>
<dbReference type="EMBL" id="JQ240309">
    <property type="protein sequence ID" value="AFU73861.1"/>
    <property type="molecule type" value="mRNA"/>
</dbReference>
<dbReference type="SMR" id="R9QMZ0"/>
<dbReference type="UniPathway" id="UPA00213"/>
<dbReference type="UniPathway" id="UPA00924"/>
<dbReference type="GO" id="GO:0009507">
    <property type="term" value="C:chloroplast"/>
    <property type="evidence" value="ECO:0007669"/>
    <property type="project" value="UniProtKB-SubCell"/>
</dbReference>
<dbReference type="GO" id="GO:0102313">
    <property type="term" value="F:1,8-cineole synthase activity"/>
    <property type="evidence" value="ECO:0000314"/>
    <property type="project" value="UniProtKB"/>
</dbReference>
<dbReference type="GO" id="GO:0000287">
    <property type="term" value="F:magnesium ion binding"/>
    <property type="evidence" value="ECO:0007669"/>
    <property type="project" value="InterPro"/>
</dbReference>
<dbReference type="GO" id="GO:0050551">
    <property type="term" value="F:myrcene synthase activity"/>
    <property type="evidence" value="ECO:0000314"/>
    <property type="project" value="UniProtKB"/>
</dbReference>
<dbReference type="GO" id="GO:0080015">
    <property type="term" value="F:sabinene synthase activity"/>
    <property type="evidence" value="ECO:0000314"/>
    <property type="project" value="UniProtKB"/>
</dbReference>
<dbReference type="GO" id="GO:0010333">
    <property type="term" value="F:terpene synthase activity"/>
    <property type="evidence" value="ECO:0000314"/>
    <property type="project" value="UniProtKB"/>
</dbReference>
<dbReference type="GO" id="GO:0016102">
    <property type="term" value="P:diterpenoid biosynthetic process"/>
    <property type="evidence" value="ECO:0007669"/>
    <property type="project" value="InterPro"/>
</dbReference>
<dbReference type="GO" id="GO:0010597">
    <property type="term" value="P:green leaf volatile biosynthetic process"/>
    <property type="evidence" value="ECO:0000314"/>
    <property type="project" value="UniProtKB"/>
</dbReference>
<dbReference type="GO" id="GO:0016114">
    <property type="term" value="P:terpenoid biosynthetic process"/>
    <property type="evidence" value="ECO:0000314"/>
    <property type="project" value="UniProtKB"/>
</dbReference>
<dbReference type="CDD" id="cd00684">
    <property type="entry name" value="Terpene_cyclase_plant_C1"/>
    <property type="match status" value="1"/>
</dbReference>
<dbReference type="FunFam" id="1.50.10.130:FF:000002">
    <property type="entry name" value="Ent-copalyl diphosphate synthase, chloroplastic"/>
    <property type="match status" value="1"/>
</dbReference>
<dbReference type="FunFam" id="1.10.600.10:FF:000005">
    <property type="entry name" value="Ent-kaur-16-ene synthase, chloroplastic"/>
    <property type="match status" value="1"/>
</dbReference>
<dbReference type="Gene3D" id="1.10.600.10">
    <property type="entry name" value="Farnesyl Diphosphate Synthase"/>
    <property type="match status" value="1"/>
</dbReference>
<dbReference type="Gene3D" id="1.50.10.130">
    <property type="entry name" value="Terpene synthase, N-terminal domain"/>
    <property type="match status" value="1"/>
</dbReference>
<dbReference type="InterPro" id="IPR008949">
    <property type="entry name" value="Isoprenoid_synthase_dom_sf"/>
</dbReference>
<dbReference type="InterPro" id="IPR034741">
    <property type="entry name" value="Terpene_cyclase-like_1_C"/>
</dbReference>
<dbReference type="InterPro" id="IPR044814">
    <property type="entry name" value="Terpene_cyclase_plant_C1"/>
</dbReference>
<dbReference type="InterPro" id="IPR001906">
    <property type="entry name" value="Terpene_synth_N"/>
</dbReference>
<dbReference type="InterPro" id="IPR036965">
    <property type="entry name" value="Terpene_synth_N_sf"/>
</dbReference>
<dbReference type="InterPro" id="IPR050148">
    <property type="entry name" value="Terpene_synthase-like"/>
</dbReference>
<dbReference type="InterPro" id="IPR005630">
    <property type="entry name" value="Terpene_synthase_metal-bd"/>
</dbReference>
<dbReference type="InterPro" id="IPR008930">
    <property type="entry name" value="Terpenoid_cyclase/PrenylTrfase"/>
</dbReference>
<dbReference type="PANTHER" id="PTHR31739:SF25">
    <property type="entry name" value="(E,E)-GERANYLLINALOOL SYNTHASE"/>
    <property type="match status" value="1"/>
</dbReference>
<dbReference type="PANTHER" id="PTHR31739">
    <property type="entry name" value="ENT-COPALYL DIPHOSPHATE SYNTHASE, CHLOROPLASTIC"/>
    <property type="match status" value="1"/>
</dbReference>
<dbReference type="Pfam" id="PF01397">
    <property type="entry name" value="Terpene_synth"/>
    <property type="match status" value="1"/>
</dbReference>
<dbReference type="Pfam" id="PF03936">
    <property type="entry name" value="Terpene_synth_C"/>
    <property type="match status" value="1"/>
</dbReference>
<dbReference type="SFLD" id="SFLDS00005">
    <property type="entry name" value="Isoprenoid_Synthase_Type_I"/>
    <property type="match status" value="1"/>
</dbReference>
<dbReference type="SFLD" id="SFLDG01019">
    <property type="entry name" value="Terpene_Cyclase_Like_1_C_Termi"/>
    <property type="match status" value="1"/>
</dbReference>
<dbReference type="SFLD" id="SFLDG01014">
    <property type="entry name" value="Terpene_Cyclase_Like_1_N-term"/>
    <property type="match status" value="1"/>
</dbReference>
<dbReference type="SUPFAM" id="SSF48239">
    <property type="entry name" value="Terpenoid cyclases/Protein prenyltransferases"/>
    <property type="match status" value="1"/>
</dbReference>
<dbReference type="SUPFAM" id="SSF48576">
    <property type="entry name" value="Terpenoid synthases"/>
    <property type="match status" value="1"/>
</dbReference>
<protein>
    <recommendedName>
        <fullName evidence="5">Alpha terpineol synthase, chloroplastic</fullName>
        <ecNumber evidence="4">4.2.3.111</ecNumber>
    </recommendedName>
    <alternativeName>
        <fullName evidence="5">(-)-sabinene synthase, chloroplastic</fullName>
        <ecNumber evidence="4">4.2.3.109</ecNumber>
    </alternativeName>
    <alternativeName>
        <fullName evidence="5">1,8-cineole synthase, chloroplastic</fullName>
        <ecNumber evidence="4">4.2.3.108</ecNumber>
    </alternativeName>
    <alternativeName>
        <fullName evidence="5">Myrcene synthase, chloroplastic</fullName>
        <ecNumber evidence="4">4.2.3.15</ecNumber>
    </alternativeName>
    <alternativeName>
        <fullName evidence="5">Terpene synthase 1,8cin</fullName>
        <shortName evidence="5">PcTPS-1,8cin</shortName>
    </alternativeName>
    <alternativeName>
        <fullName evidence="5">Terpene synthase alphaterp</fullName>
        <shortName evidence="5">PcTPS-alphaterp</shortName>
    </alternativeName>
</protein>
<sequence length="616" mass="70590">MALLSVAPLQKPLTSCSPFSTTMPTLGVCTPRKVVTPSIIMCSTTAVSDAGAKRRIANHHSNLWGDDFIHSLSTHYEAPSYRERAERLIKEVKEMFTEIEDGLSITPLSDLLSRLSMVDSIERLGIDRHFKMEIKSALDYVHSYWSEKGIGCGRESGVTDLNSTALGLRTLRLHGYPVSSSVLEQFKDEKGQFATSSIQTDGGEIRSIFNLFRASLVAFPNEKVMEDAQIFSTIYLKEYLEKIPLSSLSRQIEYVMEYGWHTNLPRLEARHYMDVFGYNEMPWMSYGNTEKLLELAKLEFNIFHSIQQRELKHISRWWKDSGFSQMNFVRHRHVEYYTLASCFAIDPQHSAFRVSFAKMCHLVTVLDDIYDTFGTMEELQLFTAAVKRWDPSATDSLPEYMKRVYTVLYETVNEMAQVAKKSQGRDTINYARHAWEAYLDSYMKEAEWISTGCLPTFEEYYENGKISFGYRISMLQPILSMDIPFPHHILQEIDYPSRFSSLAAGILRLKGDTRCYQADSARGEEASCISCYMKENPGLTEEDVVNHIHGMVDDLIKELNWELLKPDCNVPISSKKHAFDICRAVHHGYKYRDGYSVATNEIKDLVMITVLEPVPL</sequence>
<evidence type="ECO:0000250" key="1">
    <source>
        <dbReference type="UniProtKB" id="A0A1C9J6A7"/>
    </source>
</evidence>
<evidence type="ECO:0000250" key="2">
    <source>
        <dbReference type="UniProtKB" id="Q40577"/>
    </source>
</evidence>
<evidence type="ECO:0000255" key="3"/>
<evidence type="ECO:0000269" key="4">
    <source>
    </source>
</evidence>
<evidence type="ECO:0000303" key="5">
    <source>
    </source>
</evidence>
<evidence type="ECO:0000305" key="6"/>
<keyword id="KW-0150">Chloroplast</keyword>
<keyword id="KW-0456">Lyase</keyword>
<keyword id="KW-0460">Magnesium</keyword>
<keyword id="KW-0479">Metal-binding</keyword>
<keyword id="KW-0934">Plastid</keyword>
<keyword id="KW-0809">Transit peptide</keyword>